<keyword id="KW-0413">Isomerase</keyword>
<keyword id="KW-0423">Lactose metabolism</keyword>
<protein>
    <recommendedName>
        <fullName evidence="1">Galactose-6-phosphate isomerase subunit LacB</fullName>
        <ecNumber evidence="1">5.3.1.26</ecNumber>
    </recommendedName>
</protein>
<gene>
    <name evidence="1" type="primary">lacB</name>
    <name type="ordered locus">SPCG_1106</name>
</gene>
<accession>B2IPT6</accession>
<dbReference type="EC" id="5.3.1.26" evidence="1"/>
<dbReference type="EMBL" id="CP001033">
    <property type="protein sequence ID" value="ACB90358.1"/>
    <property type="molecule type" value="Genomic_DNA"/>
</dbReference>
<dbReference type="RefSeq" id="WP_001216910.1">
    <property type="nucleotide sequence ID" value="NC_010582.1"/>
</dbReference>
<dbReference type="SMR" id="B2IPT6"/>
<dbReference type="KEGG" id="spw:SPCG_1106"/>
<dbReference type="HOGENOM" id="CLU_091396_2_0_9"/>
<dbReference type="UniPathway" id="UPA00702">
    <property type="reaction ID" value="UER00714"/>
</dbReference>
<dbReference type="GO" id="GO:0050044">
    <property type="term" value="F:galactose-6-phosphate isomerase activity"/>
    <property type="evidence" value="ECO:0007669"/>
    <property type="project" value="UniProtKB-UniRule"/>
</dbReference>
<dbReference type="GO" id="GO:0004751">
    <property type="term" value="F:ribose-5-phosphate isomerase activity"/>
    <property type="evidence" value="ECO:0007669"/>
    <property type="project" value="TreeGrafter"/>
</dbReference>
<dbReference type="GO" id="GO:0019316">
    <property type="term" value="P:D-allose catabolic process"/>
    <property type="evidence" value="ECO:0007669"/>
    <property type="project" value="TreeGrafter"/>
</dbReference>
<dbReference type="GO" id="GO:0019388">
    <property type="term" value="P:galactose catabolic process"/>
    <property type="evidence" value="ECO:0007669"/>
    <property type="project" value="UniProtKB-UniPathway"/>
</dbReference>
<dbReference type="GO" id="GO:0019512">
    <property type="term" value="P:lactose catabolic process via tagatose-6-phosphate"/>
    <property type="evidence" value="ECO:0007669"/>
    <property type="project" value="UniProtKB-UniRule"/>
</dbReference>
<dbReference type="GO" id="GO:0009052">
    <property type="term" value="P:pentose-phosphate shunt, non-oxidative branch"/>
    <property type="evidence" value="ECO:0007669"/>
    <property type="project" value="TreeGrafter"/>
</dbReference>
<dbReference type="Gene3D" id="3.40.1400.10">
    <property type="entry name" value="Sugar-phosphate isomerase, RpiB/LacA/LacB"/>
    <property type="match status" value="1"/>
</dbReference>
<dbReference type="HAMAP" id="MF_01556">
    <property type="entry name" value="LacB"/>
    <property type="match status" value="1"/>
</dbReference>
<dbReference type="InterPro" id="IPR004784">
    <property type="entry name" value="LacB"/>
</dbReference>
<dbReference type="InterPro" id="IPR003500">
    <property type="entry name" value="RpiB_LacA_LacB"/>
</dbReference>
<dbReference type="InterPro" id="IPR036569">
    <property type="entry name" value="RpiB_LacA_LacB_sf"/>
</dbReference>
<dbReference type="NCBIfam" id="TIGR01119">
    <property type="entry name" value="lacB"/>
    <property type="match status" value="1"/>
</dbReference>
<dbReference type="NCBIfam" id="NF004051">
    <property type="entry name" value="PRK05571.1"/>
    <property type="match status" value="1"/>
</dbReference>
<dbReference type="NCBIfam" id="NF006381">
    <property type="entry name" value="PRK08622.1"/>
    <property type="match status" value="1"/>
</dbReference>
<dbReference type="NCBIfam" id="NF009258">
    <property type="entry name" value="PRK12615.1"/>
    <property type="match status" value="1"/>
</dbReference>
<dbReference type="NCBIfam" id="TIGR00689">
    <property type="entry name" value="rpiB_lacA_lacB"/>
    <property type="match status" value="1"/>
</dbReference>
<dbReference type="PANTHER" id="PTHR30345:SF0">
    <property type="entry name" value="DNA DAMAGE-REPAIR_TOLERATION PROTEIN DRT102"/>
    <property type="match status" value="1"/>
</dbReference>
<dbReference type="PANTHER" id="PTHR30345">
    <property type="entry name" value="RIBOSE-5-PHOSPHATE ISOMERASE B"/>
    <property type="match status" value="1"/>
</dbReference>
<dbReference type="Pfam" id="PF02502">
    <property type="entry name" value="LacAB_rpiB"/>
    <property type="match status" value="1"/>
</dbReference>
<dbReference type="PIRSF" id="PIRSF005384">
    <property type="entry name" value="RpiB_LacA_B"/>
    <property type="match status" value="1"/>
</dbReference>
<dbReference type="SUPFAM" id="SSF89623">
    <property type="entry name" value="Ribose/Galactose isomerase RpiB/AlsB"/>
    <property type="match status" value="1"/>
</dbReference>
<comment type="catalytic activity">
    <reaction evidence="1">
        <text>aldehydo-D-galactose 6-phosphate = keto-D-tagatose 6-phosphate</text>
        <dbReference type="Rhea" id="RHEA:13033"/>
        <dbReference type="ChEBI" id="CHEBI:58255"/>
        <dbReference type="ChEBI" id="CHEBI:134283"/>
        <dbReference type="EC" id="5.3.1.26"/>
    </reaction>
</comment>
<comment type="pathway">
    <text evidence="1">Carbohydrate metabolism; D-galactose 6-phosphate degradation; D-tagatose 6-phosphate from D-galactose 6-phosphate: step 1/1.</text>
</comment>
<comment type="subunit">
    <text evidence="1">Heteromultimeric protein consisting of LacA and LacB.</text>
</comment>
<comment type="similarity">
    <text evidence="1">Belongs to the LacAB/RpiB family.</text>
</comment>
<feature type="chain" id="PRO_1000147088" description="Galactose-6-phosphate isomerase subunit LacB">
    <location>
        <begin position="1"/>
        <end position="171"/>
    </location>
</feature>
<evidence type="ECO:0000255" key="1">
    <source>
        <dbReference type="HAMAP-Rule" id="MF_01556"/>
    </source>
</evidence>
<proteinExistence type="inferred from homology"/>
<name>LACB_STRPS</name>
<organism>
    <name type="scientific">Streptococcus pneumoniae (strain CGSP14)</name>
    <dbReference type="NCBI Taxonomy" id="516950"/>
    <lineage>
        <taxon>Bacteria</taxon>
        <taxon>Bacillati</taxon>
        <taxon>Bacillota</taxon>
        <taxon>Bacilli</taxon>
        <taxon>Lactobacillales</taxon>
        <taxon>Streptococcaceae</taxon>
        <taxon>Streptococcus</taxon>
    </lineage>
</organism>
<reference key="1">
    <citation type="journal article" date="2009" name="BMC Genomics">
        <title>Genome evolution driven by host adaptations results in a more virulent and antimicrobial-resistant Streptococcus pneumoniae serotype 14.</title>
        <authorList>
            <person name="Ding F."/>
            <person name="Tang P."/>
            <person name="Hsu M.-H."/>
            <person name="Cui P."/>
            <person name="Hu S."/>
            <person name="Yu J."/>
            <person name="Chiu C.-H."/>
        </authorList>
    </citation>
    <scope>NUCLEOTIDE SEQUENCE [LARGE SCALE GENOMIC DNA]</scope>
    <source>
        <strain>CGSP14</strain>
    </source>
</reference>
<sequence length="171" mass="18958">MRIAIGCDHIVTDEKMAVSEFLKSKGYEVIDFGTYDHTRTHYPIFGKKVGEAVTSGQADLGVCICGTGVGINNAVNKVPGVRSALVRDMTTALYAKEQLNANVIGFGGKITGELLMCDIIEAFIHAEYKPSEENKKLIAKIEHLESHNAQQTDANFFTEFLEKWDRGEYHD</sequence>